<feature type="chain" id="PRO_0000451752" description="Serine hydroxymethyltransferase">
    <location>
        <begin position="1"/>
        <end position="465"/>
    </location>
</feature>
<feature type="modified residue" description="N6-(pyridoxal phosphate)lysine" evidence="2">
    <location>
        <position position="241"/>
    </location>
</feature>
<feature type="mutagenesis site" description="The kcat/Km for tetrahydrofolate is 1.1-fold lower than that of the wild-type. The kcat/Km for L-serine decreases to 30% compared to the wild-type." evidence="4">
    <original>H</original>
    <variation>A</variation>
    <location>
        <position position="119"/>
    </location>
</feature>
<feature type="mutagenesis site" description="The kcat/Km for tetrahydrofolate is 7.4-fold lower than that of the wild-type." evidence="4">
    <original>H</original>
    <variation>A</variation>
    <location>
        <position position="132"/>
    </location>
</feature>
<feature type="mutagenesis site" description="The kcat/Km for tetrahydrofolate is 1.7-fold lower than that of the wild-type. The kcat/Km for L-serine decreases to 32% compared to the wild-type." evidence="4">
    <original>H</original>
    <variation>A</variation>
    <location>
        <position position="135"/>
    </location>
</feature>
<feature type="sequence conflict" description="In Ref. 1; BBG28363." evidence="6" ref="1">
    <original>G</original>
    <variation>D</variation>
    <location>
        <position position="136"/>
    </location>
</feature>
<feature type="sequence conflict" description="In Ref. 1; BBG28363." evidence="6" ref="1">
    <original>E</original>
    <variation>D</variation>
    <location>
        <position position="417"/>
    </location>
</feature>
<reference evidence="9" key="1">
    <citation type="journal article" date="2019" name="Arch. Insect Biochem. Physiol.">
        <title>Serine hydroxymethyltransferase from the silkworm Bombyx mori: Identification, distribution, and biochemical characterization.</title>
        <authorList>
            <person name="Haque M.R."/>
            <person name="Hirowatari A."/>
            <person name="Nai N."/>
            <person name="Furuya S."/>
            <person name="Yamamoto K."/>
        </authorList>
    </citation>
    <scope>NUCLEOTIDE SEQUENCE [MRNA]</scope>
    <scope>FUNCTION</scope>
    <scope>CATALYTIC ACTIVITY</scope>
    <scope>BIOPHYSICOCHEMICAL PROPERTIES</scope>
    <scope>TISSUE SPECIFICITY</scope>
    <scope>MUTAGENESIS OF HIS-119; HIS-132 AND HIS-135</scope>
    <source>
        <strain evidence="5">p50T</strain>
        <tissue evidence="5">Larva</tissue>
    </source>
</reference>
<reference evidence="8" key="2">
    <citation type="submission" date="2005-11" db="EMBL/GenBank/DDBJ databases">
        <title>Blast silkworm EST database for functional genes.</title>
        <authorList>
            <person name="Niu B.L."/>
            <person name="Meng Z.Q."/>
            <person name="Weng H.B."/>
            <person name="Shen W.F."/>
            <person name="He L.H."/>
            <person name="Zheng K.F."/>
            <person name="Ye S.T."/>
            <person name="Lin T.B."/>
            <person name="Chen J.E."/>
        </authorList>
    </citation>
    <scope>NUCLEOTIDE SEQUENCE [MRNA]</scope>
</reference>
<reference key="3">
    <citation type="journal article" date="2008" name="Insect Biochem. Mol. Biol.">
        <title>The genome of a lepidopteran model insect, the silkworm Bombyx mori.</title>
        <authorList>
            <consortium name="International Silkworm Genome Consortium"/>
        </authorList>
    </citation>
    <scope>NUCLEOTIDE SEQUENCE [LARGE SCALE GENOMIC DNA]</scope>
    <source>
        <strain>p50T</strain>
    </source>
</reference>
<protein>
    <recommendedName>
        <fullName evidence="3 5">Serine hydroxymethyltransferase</fullName>
        <shortName evidence="5">SHMT</shortName>
        <ecNumber evidence="3 4">2.1.2.1</ecNumber>
    </recommendedName>
    <alternativeName>
        <fullName evidence="6">Glycine hydroxymethyltransferase</fullName>
    </alternativeName>
    <alternativeName>
        <fullName evidence="6">Serine methylase</fullName>
    </alternativeName>
    <alternativeName>
        <fullName evidence="5">bmSHMT</fullName>
    </alternativeName>
</protein>
<accession>Q2F5L3</accession>
<accession>A0A3S5XFE5</accession>
<gene>
    <name type="primary">692975</name>
</gene>
<keyword id="KW-0489">Methyltransferase</keyword>
<keyword id="KW-0554">One-carbon metabolism</keyword>
<keyword id="KW-0663">Pyridoxal phosphate</keyword>
<keyword id="KW-1185">Reference proteome</keyword>
<keyword id="KW-0808">Transferase</keyword>
<comment type="function">
    <text evidence="3 4">Interconversion of serine and glycine.</text>
</comment>
<comment type="catalytic activity">
    <reaction evidence="3 4">
        <text>(6R)-5,10-methylene-5,6,7,8-tetrahydrofolate + glycine + H2O = (6S)-5,6,7,8-tetrahydrofolate + L-serine</text>
        <dbReference type="Rhea" id="RHEA:15481"/>
        <dbReference type="ChEBI" id="CHEBI:15377"/>
        <dbReference type="ChEBI" id="CHEBI:15636"/>
        <dbReference type="ChEBI" id="CHEBI:33384"/>
        <dbReference type="ChEBI" id="CHEBI:57305"/>
        <dbReference type="ChEBI" id="CHEBI:57453"/>
        <dbReference type="EC" id="2.1.2.1"/>
    </reaction>
    <physiologicalReaction direction="right-to-left" evidence="4">
        <dbReference type="Rhea" id="RHEA:15483"/>
    </physiologicalReaction>
</comment>
<comment type="cofactor">
    <cofactor evidence="2 3 7">
        <name>pyridoxal 5'-phosphate</name>
        <dbReference type="ChEBI" id="CHEBI:597326"/>
    </cofactor>
</comment>
<comment type="biophysicochemical properties">
    <kinetics>
        <KM evidence="4">1.8 mM for L-serine (at pH 3.0 and 30 degrees Celsius)</KM>
        <KM evidence="4">0.055 mM for tetrahydrofolate (at pH 3.0 and 30 degrees Celsius)</KM>
        <text evidence="4">The kcat/Km for tetrahydrofolate is 0.081 mM(-1)sec(-1). The kcat/Km for L-serine is 0.0022 mM(-1)sec(-1).</text>
    </kinetics>
    <phDependence>
        <text evidence="4">Optimum pH is 3.0. Stable under acidic conditions. Retains over 70% of its original activity at pH range of 3-6.</text>
    </phDependence>
    <temperatureDependence>
        <text evidence="4">Optimum temperature is 30 degrees Celsius.</text>
    </temperatureDependence>
</comment>
<comment type="pathway">
    <text evidence="3 7">One-carbon metabolism; tetrahydrofolate interconversion.</text>
</comment>
<comment type="subunit">
    <text evidence="1">Homotetramer.</text>
</comment>
<comment type="tissue specificity">
    <text evidence="4">Highest expression in the ovary and testis. 6- to 7-fold lower expression in hemocyte, silk gland, midgut and fat body.</text>
</comment>
<comment type="similarity">
    <text evidence="3">Belongs to the SHMT family.</text>
</comment>
<organism evidence="8">
    <name type="scientific">Bombyx mori</name>
    <name type="common">Silk moth</name>
    <dbReference type="NCBI Taxonomy" id="7091"/>
    <lineage>
        <taxon>Eukaryota</taxon>
        <taxon>Metazoa</taxon>
        <taxon>Ecdysozoa</taxon>
        <taxon>Arthropoda</taxon>
        <taxon>Hexapoda</taxon>
        <taxon>Insecta</taxon>
        <taxon>Pterygota</taxon>
        <taxon>Neoptera</taxon>
        <taxon>Endopterygota</taxon>
        <taxon>Lepidoptera</taxon>
        <taxon>Glossata</taxon>
        <taxon>Ditrysia</taxon>
        <taxon>Bombycoidea</taxon>
        <taxon>Bombycidae</taxon>
        <taxon>Bombycinae</taxon>
        <taxon>Bombyx</taxon>
    </lineage>
</organism>
<proteinExistence type="evidence at protein level"/>
<dbReference type="EC" id="2.1.2.1" evidence="3 4"/>
<dbReference type="EMBL" id="LC422686">
    <property type="protein sequence ID" value="BBG28363.1"/>
    <property type="molecule type" value="mRNA"/>
</dbReference>
<dbReference type="EMBL" id="DQ311410">
    <property type="protein sequence ID" value="ABD36354.1"/>
    <property type="molecule type" value="mRNA"/>
</dbReference>
<dbReference type="EMBL" id="BABH01014817">
    <property type="status" value="NOT_ANNOTATED_CDS"/>
    <property type="molecule type" value="Genomic_DNA"/>
</dbReference>
<dbReference type="SMR" id="Q2F5L3"/>
<dbReference type="FunCoup" id="Q2F5L3">
    <property type="interactions" value="1156"/>
</dbReference>
<dbReference type="STRING" id="7091.Q2F5L3"/>
<dbReference type="PaxDb" id="7091-BGIBMGA007079-TA"/>
<dbReference type="EnsemblMetazoa" id="NM_001046814.1">
    <property type="protein sequence ID" value="NP_001040279.1"/>
    <property type="gene ID" value="LOC692975"/>
</dbReference>
<dbReference type="EnsemblMetazoa" id="XM_012695748.3">
    <property type="protein sequence ID" value="XP_012551202.1"/>
    <property type="gene ID" value="LOC692975"/>
</dbReference>
<dbReference type="KEGG" id="bmor:692975"/>
<dbReference type="CTD" id="31524"/>
<dbReference type="eggNOG" id="KOG2467">
    <property type="taxonomic scope" value="Eukaryota"/>
</dbReference>
<dbReference type="HOGENOM" id="CLU_022477_0_1_1"/>
<dbReference type="InParanoid" id="Q2F5L3"/>
<dbReference type="OMA" id="CQFANVQ"/>
<dbReference type="SABIO-RK" id="Q2F5L3"/>
<dbReference type="UniPathway" id="UPA00193"/>
<dbReference type="Proteomes" id="UP000005204">
    <property type="component" value="Unassembled WGS sequence"/>
</dbReference>
<dbReference type="GO" id="GO:0005739">
    <property type="term" value="C:mitochondrion"/>
    <property type="evidence" value="ECO:0007669"/>
    <property type="project" value="TreeGrafter"/>
</dbReference>
<dbReference type="GO" id="GO:0005634">
    <property type="term" value="C:nucleus"/>
    <property type="evidence" value="ECO:0007669"/>
    <property type="project" value="TreeGrafter"/>
</dbReference>
<dbReference type="GO" id="GO:0004372">
    <property type="term" value="F:glycine hydroxymethyltransferase activity"/>
    <property type="evidence" value="ECO:0000314"/>
    <property type="project" value="UniProtKB"/>
</dbReference>
<dbReference type="GO" id="GO:0008168">
    <property type="term" value="F:methyltransferase activity"/>
    <property type="evidence" value="ECO:0007669"/>
    <property type="project" value="UniProtKB-KW"/>
</dbReference>
<dbReference type="GO" id="GO:0030170">
    <property type="term" value="F:pyridoxal phosphate binding"/>
    <property type="evidence" value="ECO:0000305"/>
    <property type="project" value="UniProtKB"/>
</dbReference>
<dbReference type="GO" id="GO:0019264">
    <property type="term" value="P:glycine biosynthetic process from serine"/>
    <property type="evidence" value="ECO:0000314"/>
    <property type="project" value="UniProtKB"/>
</dbReference>
<dbReference type="GO" id="GO:0006565">
    <property type="term" value="P:L-serine catabolic process"/>
    <property type="evidence" value="ECO:0000314"/>
    <property type="project" value="UniProtKB"/>
</dbReference>
<dbReference type="GO" id="GO:0032259">
    <property type="term" value="P:methylation"/>
    <property type="evidence" value="ECO:0007669"/>
    <property type="project" value="UniProtKB-KW"/>
</dbReference>
<dbReference type="GO" id="GO:0051289">
    <property type="term" value="P:protein homotetramerization"/>
    <property type="evidence" value="ECO:0000250"/>
    <property type="project" value="UniProtKB"/>
</dbReference>
<dbReference type="GO" id="GO:0035999">
    <property type="term" value="P:tetrahydrofolate interconversion"/>
    <property type="evidence" value="ECO:0000314"/>
    <property type="project" value="UniProtKB"/>
</dbReference>
<dbReference type="CDD" id="cd00378">
    <property type="entry name" value="SHMT"/>
    <property type="match status" value="1"/>
</dbReference>
<dbReference type="FunFam" id="3.40.640.10:FF:000050">
    <property type="entry name" value="Serine hydroxymethyltransferase"/>
    <property type="match status" value="1"/>
</dbReference>
<dbReference type="Gene3D" id="3.90.1150.10">
    <property type="entry name" value="Aspartate Aminotransferase, domain 1"/>
    <property type="match status" value="1"/>
</dbReference>
<dbReference type="Gene3D" id="3.40.640.10">
    <property type="entry name" value="Type I PLP-dependent aspartate aminotransferase-like (Major domain)"/>
    <property type="match status" value="1"/>
</dbReference>
<dbReference type="HAMAP" id="MF_00051">
    <property type="entry name" value="SHMT"/>
    <property type="match status" value="1"/>
</dbReference>
<dbReference type="InterPro" id="IPR015424">
    <property type="entry name" value="PyrdxlP-dep_Trfase"/>
</dbReference>
<dbReference type="InterPro" id="IPR015421">
    <property type="entry name" value="PyrdxlP-dep_Trfase_major"/>
</dbReference>
<dbReference type="InterPro" id="IPR015422">
    <property type="entry name" value="PyrdxlP-dep_Trfase_small"/>
</dbReference>
<dbReference type="InterPro" id="IPR001085">
    <property type="entry name" value="Ser_HO-MeTrfase"/>
</dbReference>
<dbReference type="InterPro" id="IPR049943">
    <property type="entry name" value="Ser_HO-MeTrfase-like"/>
</dbReference>
<dbReference type="InterPro" id="IPR019798">
    <property type="entry name" value="Ser_HO-MeTrfase_PLP_BS"/>
</dbReference>
<dbReference type="InterPro" id="IPR039429">
    <property type="entry name" value="SHMT-like_dom"/>
</dbReference>
<dbReference type="NCBIfam" id="NF000586">
    <property type="entry name" value="PRK00011.1"/>
    <property type="match status" value="1"/>
</dbReference>
<dbReference type="PANTHER" id="PTHR11680">
    <property type="entry name" value="SERINE HYDROXYMETHYLTRANSFERASE"/>
    <property type="match status" value="1"/>
</dbReference>
<dbReference type="PANTHER" id="PTHR11680:SF59">
    <property type="entry name" value="SERINE HYDROXYMETHYLTRANSFERASE, CYTOSOLIC"/>
    <property type="match status" value="1"/>
</dbReference>
<dbReference type="Pfam" id="PF00464">
    <property type="entry name" value="SHMT"/>
    <property type="match status" value="1"/>
</dbReference>
<dbReference type="PIRSF" id="PIRSF000412">
    <property type="entry name" value="SHMT"/>
    <property type="match status" value="1"/>
</dbReference>
<dbReference type="SUPFAM" id="SSF53383">
    <property type="entry name" value="PLP-dependent transferases"/>
    <property type="match status" value="1"/>
</dbReference>
<dbReference type="PROSITE" id="PS00096">
    <property type="entry name" value="SHMT"/>
    <property type="match status" value="1"/>
</dbReference>
<name>GLYC_BOMMO</name>
<sequence length="465" mass="51221">MSAKLLNSNLWEADPELFDIIVKEKDRQRAGLEMIASENFTSVPVLQCLSSCLHNKYSEGMPNQRYYGGNEYIDEIEILAQNRSLEAYRLKSEEWGVNVQPYSGSPANFAVYTGIVEPHGRIMGLDLPDGGHLTHGFFTATKKISATSIFFESMPYKVDPKSGLIDYDKLAETAKLFKPRLIIAGMSCYSRCLDYKRFREIADANGAYLMADMAHVSGLVAAGVIPSPFEYCDIVTTTTHKTLRGPRAGVIFFRKGVRSVKANGQKVMYDLESKINQAVFPGLQGGPHNHAIAAIATAMKQATTTEFVEYQKQVIKNAQRLCEGLISRGYSIATGGTDVHLALVDLRGVGLRGAPAERVLELCSVACNKNTVPGDISALNPSGIRLGTPALTTRGLKEADIDKVVDFIDRALKIGLEIIKVSGLKLVDFNKAIEENAEFKKKIENLKEEVENYSKSFPLPGFDKY</sequence>
<evidence type="ECO:0000250" key="1">
    <source>
        <dbReference type="UniProtKB" id="P34896"/>
    </source>
</evidence>
<evidence type="ECO:0000255" key="2">
    <source>
        <dbReference type="PIRSR" id="PIRSR000412-50"/>
    </source>
</evidence>
<evidence type="ECO:0000255" key="3">
    <source>
        <dbReference type="RuleBase" id="RU000585"/>
    </source>
</evidence>
<evidence type="ECO:0000269" key="4">
    <source>
    </source>
</evidence>
<evidence type="ECO:0000303" key="5">
    <source>
    </source>
</evidence>
<evidence type="ECO:0000305" key="6"/>
<evidence type="ECO:0000305" key="7">
    <source>
    </source>
</evidence>
<evidence type="ECO:0000312" key="8">
    <source>
        <dbReference type="EMBL" id="ABD36354.1"/>
    </source>
</evidence>
<evidence type="ECO:0000312" key="9">
    <source>
        <dbReference type="EMBL" id="BBG28363.1"/>
    </source>
</evidence>